<sequence>MSAFASENLTSALLVVGTAIFAVLVGAKFLGGSGKPRKVLNPTEFQNFVLKEKNEISHNVAIYRFALPRPTDILGLPIGQHISLAATIEGQPKEVVRSYTPISSDNEAGYFDLLVKAYPQGNISKYLTTLKIGDNMKVRGPKGAMVYTPNMCRHIGMIAGGTGITPMLQIIKAIIRNRPRNGGNDTTQVDLIFANVNPEDILLKEELEQLVKEDDGFRVYYVLNNPPEGWTGGVGFVTPDMIKERLPAPAQDIKIMLCGPPPMISAMKKATESLGYTKARPVSKLEDQVFCF</sequence>
<protein>
    <recommendedName>
        <fullName>NADH-cytochrome b5 reductase 1</fullName>
        <ecNumber evidence="2">1.6.2.2</ecNumber>
    </recommendedName>
    <alternativeName>
        <fullName>Microsomal cytochrome b reductase</fullName>
    </alternativeName>
</protein>
<organism>
    <name type="scientific">Aspergillus oryzae (strain ATCC 42149 / RIB 40)</name>
    <name type="common">Yellow koji mold</name>
    <dbReference type="NCBI Taxonomy" id="510516"/>
    <lineage>
        <taxon>Eukaryota</taxon>
        <taxon>Fungi</taxon>
        <taxon>Dikarya</taxon>
        <taxon>Ascomycota</taxon>
        <taxon>Pezizomycotina</taxon>
        <taxon>Eurotiomycetes</taxon>
        <taxon>Eurotiomycetidae</taxon>
        <taxon>Eurotiales</taxon>
        <taxon>Aspergillaceae</taxon>
        <taxon>Aspergillus</taxon>
        <taxon>Aspergillus subgen. Circumdati</taxon>
    </lineage>
</organism>
<reference key="1">
    <citation type="journal article" date="2005" name="Nature">
        <title>Genome sequencing and analysis of Aspergillus oryzae.</title>
        <authorList>
            <person name="Machida M."/>
            <person name="Asai K."/>
            <person name="Sano M."/>
            <person name="Tanaka T."/>
            <person name="Kumagai T."/>
            <person name="Terai G."/>
            <person name="Kusumoto K."/>
            <person name="Arima T."/>
            <person name="Akita O."/>
            <person name="Kashiwagi Y."/>
            <person name="Abe K."/>
            <person name="Gomi K."/>
            <person name="Horiuchi H."/>
            <person name="Kitamoto K."/>
            <person name="Kobayashi T."/>
            <person name="Takeuchi M."/>
            <person name="Denning D.W."/>
            <person name="Galagan J.E."/>
            <person name="Nierman W.C."/>
            <person name="Yu J."/>
            <person name="Archer D.B."/>
            <person name="Bennett J.W."/>
            <person name="Bhatnagar D."/>
            <person name="Cleveland T.E."/>
            <person name="Fedorova N.D."/>
            <person name="Gotoh O."/>
            <person name="Horikawa H."/>
            <person name="Hosoyama A."/>
            <person name="Ichinomiya M."/>
            <person name="Igarashi R."/>
            <person name="Iwashita K."/>
            <person name="Juvvadi P.R."/>
            <person name="Kato M."/>
            <person name="Kato Y."/>
            <person name="Kin T."/>
            <person name="Kokubun A."/>
            <person name="Maeda H."/>
            <person name="Maeyama N."/>
            <person name="Maruyama J."/>
            <person name="Nagasaki H."/>
            <person name="Nakajima T."/>
            <person name="Oda K."/>
            <person name="Okada K."/>
            <person name="Paulsen I."/>
            <person name="Sakamoto K."/>
            <person name="Sawano T."/>
            <person name="Takahashi M."/>
            <person name="Takase K."/>
            <person name="Terabayashi Y."/>
            <person name="Wortman J.R."/>
            <person name="Yamada O."/>
            <person name="Yamagata Y."/>
            <person name="Anazawa H."/>
            <person name="Hata Y."/>
            <person name="Koide Y."/>
            <person name="Komori T."/>
            <person name="Koyama Y."/>
            <person name="Minetoki T."/>
            <person name="Suharnan S."/>
            <person name="Tanaka A."/>
            <person name="Isono K."/>
            <person name="Kuhara S."/>
            <person name="Ogasawara N."/>
            <person name="Kikuchi H."/>
        </authorList>
    </citation>
    <scope>NUCLEOTIDE SEQUENCE [LARGE SCALE GENOMIC DNA]</scope>
    <source>
        <strain>ATCC 42149 / RIB 40</strain>
    </source>
</reference>
<dbReference type="EC" id="1.6.2.2" evidence="2"/>
<dbReference type="EMBL" id="BA000051">
    <property type="protein sequence ID" value="BAE59632.1"/>
    <property type="status" value="ALT_SEQ"/>
    <property type="molecule type" value="Genomic_DNA"/>
</dbReference>
<dbReference type="RefSeq" id="XP_001821634.2">
    <property type="nucleotide sequence ID" value="XM_001821582.2"/>
</dbReference>
<dbReference type="SMR" id="Q2UFN3"/>
<dbReference type="STRING" id="510516.Q2UFN3"/>
<dbReference type="VEuPathDB" id="FungiDB:AO090026000138"/>
<dbReference type="OMA" id="LDMKGPF"/>
<dbReference type="UniPathway" id="UPA00559"/>
<dbReference type="Proteomes" id="UP000006564">
    <property type="component" value="Chromosome 3"/>
</dbReference>
<dbReference type="GO" id="GO:0005783">
    <property type="term" value="C:endoplasmic reticulum"/>
    <property type="evidence" value="ECO:0007669"/>
    <property type="project" value="TreeGrafter"/>
</dbReference>
<dbReference type="GO" id="GO:0005741">
    <property type="term" value="C:mitochondrial outer membrane"/>
    <property type="evidence" value="ECO:0007669"/>
    <property type="project" value="UniProtKB-SubCell"/>
</dbReference>
<dbReference type="GO" id="GO:0004128">
    <property type="term" value="F:cytochrome-b5 reductase activity, acting on NAD(P)H"/>
    <property type="evidence" value="ECO:0000250"/>
    <property type="project" value="UniProtKB"/>
</dbReference>
<dbReference type="GO" id="GO:0003954">
    <property type="term" value="F:NADH dehydrogenase activity"/>
    <property type="evidence" value="ECO:0000250"/>
    <property type="project" value="UniProtKB"/>
</dbReference>
<dbReference type="GO" id="GO:0016740">
    <property type="term" value="F:transferase activity"/>
    <property type="evidence" value="ECO:0007669"/>
    <property type="project" value="UniProtKB-KW"/>
</dbReference>
<dbReference type="GO" id="GO:0017183">
    <property type="term" value="P:protein histidyl modification to diphthamide"/>
    <property type="evidence" value="ECO:0000250"/>
    <property type="project" value="UniProtKB"/>
</dbReference>
<dbReference type="GO" id="GO:0002926">
    <property type="term" value="P:tRNA wobble base 5-methoxycarbonylmethyl-2-thiouridinylation"/>
    <property type="evidence" value="ECO:0000250"/>
    <property type="project" value="UniProtKB"/>
</dbReference>
<dbReference type="CDD" id="cd06183">
    <property type="entry name" value="cyt_b5_reduct_like"/>
    <property type="match status" value="1"/>
</dbReference>
<dbReference type="FunFam" id="2.40.30.10:FF:000032">
    <property type="entry name" value="NADH-cytochrome b5 reductase"/>
    <property type="match status" value="1"/>
</dbReference>
<dbReference type="FunFam" id="3.40.50.80:FF:000019">
    <property type="entry name" value="NADH-cytochrome b5 reductase"/>
    <property type="match status" value="1"/>
</dbReference>
<dbReference type="Gene3D" id="3.40.50.80">
    <property type="entry name" value="Nucleotide-binding domain of ferredoxin-NADP reductase (FNR) module"/>
    <property type="match status" value="1"/>
</dbReference>
<dbReference type="Gene3D" id="2.40.30.10">
    <property type="entry name" value="Translation factors"/>
    <property type="match status" value="1"/>
</dbReference>
<dbReference type="InterPro" id="IPR001834">
    <property type="entry name" value="CBR-like"/>
</dbReference>
<dbReference type="InterPro" id="IPR008333">
    <property type="entry name" value="Cbr1-like_FAD-bd_dom"/>
</dbReference>
<dbReference type="InterPro" id="IPR017927">
    <property type="entry name" value="FAD-bd_FR_type"/>
</dbReference>
<dbReference type="InterPro" id="IPR001709">
    <property type="entry name" value="Flavoprot_Pyr_Nucl_cyt_Rdtase"/>
</dbReference>
<dbReference type="InterPro" id="IPR039261">
    <property type="entry name" value="FNR_nucleotide-bd"/>
</dbReference>
<dbReference type="InterPro" id="IPR001433">
    <property type="entry name" value="OxRdtase_FAD/NAD-bd"/>
</dbReference>
<dbReference type="InterPro" id="IPR017938">
    <property type="entry name" value="Riboflavin_synthase-like_b-brl"/>
</dbReference>
<dbReference type="PANTHER" id="PTHR19370">
    <property type="entry name" value="NADH-CYTOCHROME B5 REDUCTASE"/>
    <property type="match status" value="1"/>
</dbReference>
<dbReference type="PANTHER" id="PTHR19370:SF184">
    <property type="entry name" value="NADH-CYTOCHROME B5 REDUCTASE-LIKE"/>
    <property type="match status" value="1"/>
</dbReference>
<dbReference type="Pfam" id="PF00970">
    <property type="entry name" value="FAD_binding_6"/>
    <property type="match status" value="1"/>
</dbReference>
<dbReference type="Pfam" id="PF00175">
    <property type="entry name" value="NAD_binding_1"/>
    <property type="match status" value="1"/>
</dbReference>
<dbReference type="PRINTS" id="PR00406">
    <property type="entry name" value="CYTB5RDTASE"/>
</dbReference>
<dbReference type="PRINTS" id="PR00371">
    <property type="entry name" value="FPNCR"/>
</dbReference>
<dbReference type="SUPFAM" id="SSF52343">
    <property type="entry name" value="Ferredoxin reductase-like, C-terminal NADP-linked domain"/>
    <property type="match status" value="1"/>
</dbReference>
<dbReference type="SUPFAM" id="SSF63380">
    <property type="entry name" value="Riboflavin synthase domain-like"/>
    <property type="match status" value="1"/>
</dbReference>
<dbReference type="PROSITE" id="PS51384">
    <property type="entry name" value="FAD_FR"/>
    <property type="match status" value="1"/>
</dbReference>
<proteinExistence type="inferred from homology"/>
<name>NCB5R_ASPOR</name>
<keyword id="KW-0274">FAD</keyword>
<keyword id="KW-0285">Flavoprotein</keyword>
<keyword id="KW-0472">Membrane</keyword>
<keyword id="KW-0496">Mitochondrion</keyword>
<keyword id="KW-1000">Mitochondrion outer membrane</keyword>
<keyword id="KW-0520">NAD</keyword>
<keyword id="KW-0560">Oxidoreductase</keyword>
<keyword id="KW-1185">Reference proteome</keyword>
<keyword id="KW-0808">Transferase</keyword>
<keyword id="KW-0812">Transmembrane</keyword>
<keyword id="KW-1133">Transmembrane helix</keyword>
<evidence type="ECO:0000250" key="1"/>
<evidence type="ECO:0000250" key="2">
    <source>
        <dbReference type="UniProtKB" id="P38626"/>
    </source>
</evidence>
<evidence type="ECO:0000255" key="3"/>
<evidence type="ECO:0000255" key="4">
    <source>
        <dbReference type="PROSITE-ProRule" id="PRU00716"/>
    </source>
</evidence>
<evidence type="ECO:0000305" key="5"/>
<gene>
    <name type="primary">cbr1</name>
    <name type="ORF">AO090026000138</name>
</gene>
<comment type="function">
    <text evidence="2">NADH-dependent reductase for dph3 and cytochrome b5. Required for the first step of diphthamide biosynthesis, a post-translational modification of histidine which occurs in elongation factor 2. Dph1 and dph2 transfer a 3-amino-3-carboxypropyl (ACP) group from S-adenosyl-L-methionine (SAM) to a histidine residue, the reaction is assisted by a reduction system comprising dph3 and a NADH-dependent reductase, predominantly cbr1. By reducing dph3, also involved in the formation of the tRNA wobble base modification mcm5s 2U (5-methoxycarbonylmethyl-2-thiouridine), mediated by the elongator complex. The cytochrome b5/NADH cytochrome b5 reductase electron transfer system supports the catalytic activity of several sterol biosynthetic enzymes.</text>
</comment>
<comment type="catalytic activity">
    <reaction evidence="2">
        <text>2 Fe(III)-[cytochrome b5] + NADH = 2 Fe(II)-[cytochrome b5] + NAD(+) + H(+)</text>
        <dbReference type="Rhea" id="RHEA:46680"/>
        <dbReference type="Rhea" id="RHEA-COMP:10438"/>
        <dbReference type="Rhea" id="RHEA-COMP:10439"/>
        <dbReference type="ChEBI" id="CHEBI:15378"/>
        <dbReference type="ChEBI" id="CHEBI:29033"/>
        <dbReference type="ChEBI" id="CHEBI:29034"/>
        <dbReference type="ChEBI" id="CHEBI:57540"/>
        <dbReference type="ChEBI" id="CHEBI:57945"/>
        <dbReference type="EC" id="1.6.2.2"/>
    </reaction>
</comment>
<comment type="catalytic activity">
    <reaction evidence="2">
        <text>2 Fe(3+)-[Dph3] + NADH = 2 Fe(2+)-[Dph3] + NAD(+) + H(+)</text>
        <dbReference type="Rhea" id="RHEA:71231"/>
        <dbReference type="Rhea" id="RHEA-COMP:18002"/>
        <dbReference type="Rhea" id="RHEA-COMP:18003"/>
        <dbReference type="ChEBI" id="CHEBI:15378"/>
        <dbReference type="ChEBI" id="CHEBI:29033"/>
        <dbReference type="ChEBI" id="CHEBI:29034"/>
        <dbReference type="ChEBI" id="CHEBI:57540"/>
        <dbReference type="ChEBI" id="CHEBI:57945"/>
        <dbReference type="ChEBI" id="CHEBI:83228"/>
    </reaction>
    <physiologicalReaction direction="left-to-right" evidence="2">
        <dbReference type="Rhea" id="RHEA:71232"/>
    </physiologicalReaction>
</comment>
<comment type="cofactor">
    <cofactor evidence="3">
        <name>FAD</name>
        <dbReference type="ChEBI" id="CHEBI:57692"/>
    </cofactor>
</comment>
<comment type="pathway">
    <text evidence="2">Protein modification; peptidyl-diphthamide biosynthesis.</text>
</comment>
<comment type="subunit">
    <text evidence="2">Monomer. Component of the 2-(3-amino-3-carboxypropyl)histidine synthase complex composed of dph1, dph2, dph3 and a NADH-dependent reductase, predominantly cbr1.</text>
</comment>
<comment type="subcellular location">
    <subcellularLocation>
        <location evidence="2">Mitochondrion outer membrane</location>
        <topology evidence="3">Single-pass membrane protein</topology>
    </subcellularLocation>
</comment>
<comment type="similarity">
    <text evidence="5">Belongs to the flavoprotein pyridine nucleotide cytochrome reductase family.</text>
</comment>
<comment type="sequence caution" evidence="5">
    <conflict type="erroneous gene model prediction">
        <sequence resource="EMBL-CDS" id="BAE59632"/>
    </conflict>
</comment>
<feature type="chain" id="PRO_0000330146" description="NADH-cytochrome b5 reductase 1">
    <location>
        <begin position="1"/>
        <end position="292"/>
    </location>
</feature>
<feature type="transmembrane region" description="Helical" evidence="3">
    <location>
        <begin position="12"/>
        <end position="32"/>
    </location>
</feature>
<feature type="domain" description="FAD-binding FR-type" evidence="4">
    <location>
        <begin position="43"/>
        <end position="148"/>
    </location>
</feature>
<feature type="binding site" evidence="1">
    <location>
        <begin position="128"/>
        <end position="143"/>
    </location>
    <ligand>
        <name>FAD</name>
        <dbReference type="ChEBI" id="CHEBI:57692"/>
    </ligand>
</feature>
<feature type="binding site" evidence="1">
    <location>
        <begin position="154"/>
        <end position="191"/>
    </location>
    <ligand>
        <name>FAD</name>
        <dbReference type="ChEBI" id="CHEBI:57692"/>
    </ligand>
</feature>
<accession>Q2UFN3</accession>